<keyword id="KW-0025">Alternative splicing</keyword>
<keyword id="KW-0175">Coiled coil</keyword>
<keyword id="KW-0963">Cytoplasm</keyword>
<keyword id="KW-0206">Cytoskeleton</keyword>
<keyword id="KW-0479">Metal-binding</keyword>
<keyword id="KW-0524">Neurogenesis</keyword>
<keyword id="KW-0597">Phosphoprotein</keyword>
<keyword id="KW-1267">Proteomics identification</keyword>
<keyword id="KW-1185">Reference proteome</keyword>
<keyword id="KW-0862">Zinc</keyword>
<keyword id="KW-0863">Zinc-finger</keyword>
<accession>Q70YC5</accession>
<accession>A8K0F0</accession>
<accession>O94930</accession>
<accession>Q05D75</accession>
<accession>Q5HYE6</accession>
<accession>Q68SG8</accession>
<accession>Q6NSK2</accession>
<accession>Q6P9D4</accession>
<accession>Q70YC6</accession>
<accession>Q70YC7</accession>
<feature type="chain" id="PRO_0000076374" description="Protein ZNF365">
    <location>
        <begin position="1"/>
        <end position="407"/>
    </location>
</feature>
<feature type="zinc finger region" description="C2H2-type; degenerate" evidence="4">
    <location>
        <begin position="26"/>
        <end position="51"/>
    </location>
</feature>
<feature type="region of interest" description="Disordered" evidence="5">
    <location>
        <begin position="347"/>
        <end position="392"/>
    </location>
</feature>
<feature type="coiled-coil region" evidence="3">
    <location>
        <begin position="169"/>
        <end position="297"/>
    </location>
</feature>
<feature type="compositionally biased region" description="Basic and acidic residues" evidence="5">
    <location>
        <begin position="362"/>
        <end position="381"/>
    </location>
</feature>
<feature type="modified residue" description="Phosphoserine" evidence="2">
    <location>
        <position position="16"/>
    </location>
</feature>
<feature type="modified residue" description="Phosphoserine" evidence="2">
    <location>
        <position position="138"/>
    </location>
</feature>
<feature type="modified residue" description="Phosphothreonine" evidence="2">
    <location>
        <position position="175"/>
    </location>
</feature>
<feature type="modified residue" description="Phosphoserine" evidence="1">
    <location>
        <position position="369"/>
    </location>
</feature>
<feature type="splice variant" id="VSP_016596" description="In isoform 6." evidence="17">
    <location>
        <begin position="1"/>
        <end position="356"/>
    </location>
</feature>
<feature type="splice variant" id="VSP_016597" description="In isoform 5." evidence="19">
    <original>M</original>
    <variation>MTMRPPQSCEPTFRVM</variation>
    <location>
        <position position="1"/>
    </location>
</feature>
<feature type="splice variant" id="VSP_016598" description="In isoform 3." evidence="16">
    <original>LTDISSNRKPKCLSRGHPHSVCNHPDLKAHFHPKGRNHLKKAKDDRASMQPAKAIHEQAESSRDLCRPPKKGELLGFGRKGNIRPKMAKKKPTAIVNII</original>
    <variation>SWKGAGEARLVCQNDLELEIFGHINHHLSGLKDSHCLVFLQAPPVPWIILASFLWILGNPWTSSTATAGFSQIWVLFPFCGGTFHHNEKDVLGLQDFERESVSTSQSRNISLLTLGQLQNCVIGKLTIIDLLTEHLLGVRHGVICFPWGLPSSS</variation>
    <location>
        <begin position="309"/>
        <end position="407"/>
    </location>
</feature>
<feature type="splice variant" id="VSP_016599" description="In isoform 2." evidence="16">
    <original>LTDISSNRKPKCLSRGHPHSVCNHP</original>
    <variation>SWKGAGEARLVCQNDLELEESAIVE</variation>
    <location>
        <begin position="309"/>
        <end position="333"/>
    </location>
</feature>
<feature type="splice variant" id="VSP_016600" description="In isoform 2." evidence="16">
    <location>
        <begin position="334"/>
        <end position="407"/>
    </location>
</feature>
<feature type="sequence variant" id="VAR_024325" description="In dbSNP:rs3758490." evidence="6 7 8 13">
    <original>A</original>
    <variation>S</variation>
    <location>
        <position position="337"/>
    </location>
</feature>
<feature type="sequence conflict" description="In Ref. 7; AAT27443." evidence="20" ref="7">
    <original>E</original>
    <variation>Q</variation>
    <location>
        <position position="55"/>
    </location>
</feature>
<protein>
    <recommendedName>
        <fullName>Protein ZNF365</fullName>
    </recommendedName>
    <alternativeName>
        <fullName evidence="18">DISC1-binding zinc-finger protein</fullName>
    </alternativeName>
    <alternativeName>
        <fullName>Protein su48</fullName>
    </alternativeName>
</protein>
<comment type="function">
    <text evidence="2 12 14 15">Involved in the regulation of neurogenesis. Negatively regulates neurite outgrowth (PubMed:17389905). Involved in the morphogenesis of basket cells in the somatosensory cortex during embryogenesis. Involved in the positive regulation of oligodendrocyte differentiation during postnatal growth. Involved in dendritic arborization, morphogenesis of spine density dendrite, and establishment of postsynaptic dendrite density in cortical pyramidal neurons (By similarity). Involved in homologous recombination (HR) repair pathway. Required for proper resolution of DNA double-strand breaks (DSBs) by HR. Is required for recovery of stalled replication forks, and directly contributes to genomic stability. Interacts with PARP1 and mediates MRE11-dependent DNA end resection during replication fork recovery (PubMed:23966166). Contributes to genomic stability by preventing telomere dysfunction (PubMed:23776040).</text>
</comment>
<comment type="subunit">
    <text evidence="9 11 12 15">Homodimer. Interacts with NDE1 and NDEL1. Does not interact with TUBG1. Interacts with DISC1 (PubMed:17389905). Interacts with PARP1 (PubMed:23966166). Interacts with MCRS1 (PubMed:16547491).</text>
</comment>
<comment type="interaction">
    <interactant intactId="EBI-941182">
        <id>Q70YC5</id>
    </interactant>
    <interactant intactId="EBI-941227">
        <id>Q9NXR1</id>
        <label>NDE1</label>
    </interactant>
    <organismsDiffer>false</organismsDiffer>
    <experiments>3</experiments>
</comment>
<comment type="interaction">
    <interactant intactId="EBI-15580061">
        <id>Q70YC5-1</id>
    </interactant>
    <interactant intactId="EBI-15580061">
        <id>Q70YC5-1</id>
        <label>ZNF365</label>
    </interactant>
    <organismsDiffer>false</organismsDiffer>
    <experiments>4</experiments>
</comment>
<comment type="subcellular location">
    <subcellularLocation>
        <location evidence="10">Cytoplasm</location>
        <location evidence="10">Cytoskeleton</location>
        <location evidence="10">Microtubule organizing center</location>
        <location evidence="10">Centrosome</location>
    </subcellularLocation>
    <text evidence="10">localizes to the centrosome at all stages of the cell cycle.</text>
</comment>
<comment type="alternative products">
    <event type="alternative splicing"/>
    <isoform>
        <id>Q70YC5-1</id>
        <name>1</name>
        <name>ZNF365A</name>
        <sequence type="displayed"/>
    </isoform>
    <isoform>
        <id>Q70YC5-2</id>
        <name>2</name>
        <name>ZNF365B</name>
        <sequence type="described" ref="VSP_016599 VSP_016600"/>
    </isoform>
    <isoform>
        <id>Q70YC5-3</id>
        <name>3</name>
        <name>ZNF365C</name>
        <sequence type="described" ref="VSP_016598"/>
    </isoform>
    <isoform>
        <id>Q70YC5-4</id>
        <name>5</name>
        <sequence type="described" ref="VSP_016597"/>
    </isoform>
    <isoform>
        <id>Q70YC5-5</id>
        <name>6</name>
        <sequence type="described" ref="VSP_016596"/>
    </isoform>
    <isoform>
        <id>Q70YC4-1</id>
        <name>4</name>
        <name>Talanin</name>
        <name>ZNF365D</name>
        <sequence type="external"/>
    </isoform>
    <text>Additional isoforms seem to exist.</text>
</comment>
<comment type="tissue specificity">
    <text evidence="7 12">Isoform 1 is expressed in brain. Isoform 2 is expressed in placenta and at low level in lung and liver. Isoform 3 is expressed in kidney and pancreas. Isoform 1 is expressed exclusively in brain (PubMed:17389905).</text>
</comment>
<comment type="induction">
    <text evidence="15">Induced by gamma irradiation and zeocin.</text>
</comment>
<comment type="miscellaneous">
    <text evidence="15">Cells silencing ZNF365 display delayed mitotic progression and exit, due to increased replication stress, and ultimately leading to cytokinesis failure, re-duplication of centrosomes and increased aneuploidy.</text>
</comment>
<comment type="sequence caution" evidence="20">
    <conflict type="miscellaneous discrepancy">
        <sequence resource="EMBL-CDS" id="AAH17841"/>
    </conflict>
    <text>Contaminating sequence. Potential poly-A sequence.</text>
</comment>
<comment type="sequence caution" evidence="20">
    <conflict type="erroneous initiation">
        <sequence resource="EMBL-CDS" id="BAA74867"/>
    </conflict>
    <text>Extended N-terminus.</text>
</comment>
<organism>
    <name type="scientific">Homo sapiens</name>
    <name type="common">Human</name>
    <dbReference type="NCBI Taxonomy" id="9606"/>
    <lineage>
        <taxon>Eukaryota</taxon>
        <taxon>Metazoa</taxon>
        <taxon>Chordata</taxon>
        <taxon>Craniata</taxon>
        <taxon>Vertebrata</taxon>
        <taxon>Euteleostomi</taxon>
        <taxon>Mammalia</taxon>
        <taxon>Eutheria</taxon>
        <taxon>Euarchontoglires</taxon>
        <taxon>Primates</taxon>
        <taxon>Haplorrhini</taxon>
        <taxon>Catarrhini</taxon>
        <taxon>Hominidae</taxon>
        <taxon>Homo</taxon>
    </lineage>
</organism>
<name>ZN365_HUMAN</name>
<proteinExistence type="evidence at protein level"/>
<evidence type="ECO:0000250" key="1">
    <source>
        <dbReference type="UniProtKB" id="Q5PQS2"/>
    </source>
</evidence>
<evidence type="ECO:0000250" key="2">
    <source>
        <dbReference type="UniProtKB" id="Q8BG89"/>
    </source>
</evidence>
<evidence type="ECO:0000255" key="3"/>
<evidence type="ECO:0000255" key="4">
    <source>
        <dbReference type="PROSITE-ProRule" id="PRU00042"/>
    </source>
</evidence>
<evidence type="ECO:0000256" key="5">
    <source>
        <dbReference type="SAM" id="MobiDB-lite"/>
    </source>
</evidence>
<evidence type="ECO:0000269" key="6">
    <source>
    </source>
</evidence>
<evidence type="ECO:0000269" key="7">
    <source>
    </source>
</evidence>
<evidence type="ECO:0000269" key="8">
    <source>
    </source>
</evidence>
<evidence type="ECO:0000269" key="9">
    <source>
    </source>
</evidence>
<evidence type="ECO:0000269" key="10">
    <source>
    </source>
</evidence>
<evidence type="ECO:0000269" key="11">
    <source>
    </source>
</evidence>
<evidence type="ECO:0000269" key="12">
    <source>
    </source>
</evidence>
<evidence type="ECO:0000269" key="13">
    <source>
    </source>
</evidence>
<evidence type="ECO:0000269" key="14">
    <source>
    </source>
</evidence>
<evidence type="ECO:0000269" key="15">
    <source>
    </source>
</evidence>
<evidence type="ECO:0000303" key="16">
    <source>
    </source>
</evidence>
<evidence type="ECO:0000303" key="17">
    <source>
    </source>
</evidence>
<evidence type="ECO:0000303" key="18">
    <source>
    </source>
</evidence>
<evidence type="ECO:0000303" key="19">
    <source>
    </source>
</evidence>
<evidence type="ECO:0000305" key="20"/>
<sequence>MQQKAFEESRYPWQESFENVAVCLPLRCPRCGDHTRFRSLSSLRAHLEFSHSYEERTLLTKCSLFPSLKDTDLVTSSELLKPGKLQSSGNVVKQKPSYVNLYSISHEHSKDRKPFEVVAERPVSYVQTYTAMDLHADSLDGTRSGPGLPTSDTKASFEAHVREKFNRMVEAVDRTIEKRIDKLTKELAQKTAELLEVRAAFVQLTQKKQEVQRRERALNRQVDVAVEMIAVLRQRLTESEEELLRKEEEVVTFNHFLEAAAEKEVQGKARLQDFIENLLQRVELAEKQLEYYQSQQASGFVRDLSGHVLTDISSNRKPKCLSRGHPHSVCNHPDLKAHFHPKGRNHLKKAKDDRASMQPAKAIHEQAESSRDLCRPPKKGELLGFGRKGNIRPKMAKKKPTAIVNII</sequence>
<gene>
    <name type="primary">ZNF365</name>
    <name evidence="18" type="synonym">DBZ</name>
    <name type="synonym">KIAA0844</name>
</gene>
<dbReference type="EMBL" id="AJ505147">
    <property type="protein sequence ID" value="CAD43726.1"/>
    <property type="molecule type" value="mRNA"/>
</dbReference>
<dbReference type="EMBL" id="AJ505148">
    <property type="protein sequence ID" value="CAD43727.1"/>
    <property type="molecule type" value="mRNA"/>
</dbReference>
<dbReference type="EMBL" id="AJ505149">
    <property type="protein sequence ID" value="CAD43728.1"/>
    <property type="molecule type" value="mRNA"/>
</dbReference>
<dbReference type="EMBL" id="AB020651">
    <property type="protein sequence ID" value="BAA74867.2"/>
    <property type="status" value="ALT_INIT"/>
    <property type="molecule type" value="mRNA"/>
</dbReference>
<dbReference type="EMBL" id="AK289515">
    <property type="protein sequence ID" value="BAF82204.1"/>
    <property type="molecule type" value="mRNA"/>
</dbReference>
<dbReference type="EMBL" id="AK289808">
    <property type="protein sequence ID" value="BAF82497.1"/>
    <property type="molecule type" value="mRNA"/>
</dbReference>
<dbReference type="EMBL" id="BX647904">
    <property type="protein sequence ID" value="CAI46100.1"/>
    <property type="molecule type" value="mRNA"/>
</dbReference>
<dbReference type="EMBL" id="AC024597">
    <property type="status" value="NOT_ANNOTATED_CDS"/>
    <property type="molecule type" value="Genomic_DNA"/>
</dbReference>
<dbReference type="EMBL" id="AC024598">
    <property type="status" value="NOT_ANNOTATED_CDS"/>
    <property type="molecule type" value="Genomic_DNA"/>
</dbReference>
<dbReference type="EMBL" id="BC017841">
    <property type="protein sequence ID" value="AAH17841.1"/>
    <property type="status" value="ALT_SEQ"/>
    <property type="molecule type" value="mRNA"/>
</dbReference>
<dbReference type="EMBL" id="BC035049">
    <property type="protein sequence ID" value="AAH35049.1"/>
    <property type="molecule type" value="mRNA"/>
</dbReference>
<dbReference type="EMBL" id="BC060817">
    <property type="protein sequence ID" value="AAH60817.1"/>
    <property type="molecule type" value="mRNA"/>
</dbReference>
<dbReference type="EMBL" id="AY547355">
    <property type="protein sequence ID" value="AAT27443.1"/>
    <property type="molecule type" value="Genomic_DNA"/>
</dbReference>
<dbReference type="CCDS" id="CCDS31209.1">
    <molecule id="Q70YC5-1"/>
</dbReference>
<dbReference type="CCDS" id="CCDS41531.1">
    <molecule id="Q70YC5-2"/>
</dbReference>
<dbReference type="RefSeq" id="NP_055766.2">
    <molecule id="Q70YC5-1"/>
    <property type="nucleotide sequence ID" value="NM_014951.3"/>
</dbReference>
<dbReference type="RefSeq" id="NP_955522.1">
    <molecule id="Q70YC5-2"/>
    <property type="nucleotide sequence ID" value="NM_199450.3"/>
</dbReference>
<dbReference type="RefSeq" id="NP_955523.1">
    <property type="nucleotide sequence ID" value="NM_199451.2"/>
</dbReference>
<dbReference type="SMR" id="Q70YC5"/>
<dbReference type="BioGRID" id="116557">
    <property type="interactions" value="17"/>
</dbReference>
<dbReference type="CORUM" id="Q70YC5"/>
<dbReference type="DIP" id="DIP-35261N"/>
<dbReference type="FunCoup" id="Q70YC5">
    <property type="interactions" value="134"/>
</dbReference>
<dbReference type="IntAct" id="Q70YC5">
    <property type="interactions" value="14"/>
</dbReference>
<dbReference type="STRING" id="9606.ENSP00000387091"/>
<dbReference type="GlyGen" id="Q70YC5">
    <property type="glycosylation" value="1 site, 1 O-linked glycan (1 site)"/>
</dbReference>
<dbReference type="iPTMnet" id="Q70YC5"/>
<dbReference type="PhosphoSitePlus" id="Q70YC5"/>
<dbReference type="BioMuta" id="ZNF365"/>
<dbReference type="DMDM" id="317373495"/>
<dbReference type="jPOST" id="Q70YC5"/>
<dbReference type="MassIVE" id="Q70YC5"/>
<dbReference type="PaxDb" id="9606-ENSP00000387091"/>
<dbReference type="PeptideAtlas" id="Q70YC5"/>
<dbReference type="ProteomicsDB" id="68572">
    <molecule id="Q70YC5-1"/>
</dbReference>
<dbReference type="ProteomicsDB" id="68573">
    <molecule id="Q70YC5-2"/>
</dbReference>
<dbReference type="ProteomicsDB" id="68574">
    <molecule id="Q70YC5-3"/>
</dbReference>
<dbReference type="ProteomicsDB" id="68575">
    <molecule id="Q70YC5-4"/>
</dbReference>
<dbReference type="Antibodypedia" id="28272">
    <property type="antibodies" value="428 antibodies from 19 providers"/>
</dbReference>
<dbReference type="DNASU" id="22891"/>
<dbReference type="Ensembl" id="ENST00000395254.8">
    <molecule id="Q70YC5-1"/>
    <property type="protein sequence ID" value="ENSP00000378674.3"/>
    <property type="gene ID" value="ENSG00000138311.18"/>
</dbReference>
<dbReference type="Ensembl" id="ENST00000395255.7">
    <molecule id="Q70YC5-2"/>
    <property type="protein sequence ID" value="ENSP00000378675.3"/>
    <property type="gene ID" value="ENSG00000138311.18"/>
</dbReference>
<dbReference type="GeneID" id="22891"/>
<dbReference type="KEGG" id="hsa:22891"/>
<dbReference type="MANE-Select" id="ENST00000395254.8">
    <property type="protein sequence ID" value="ENSP00000378674.3"/>
    <property type="RefSeq nucleotide sequence ID" value="NM_014951.3"/>
    <property type="RefSeq protein sequence ID" value="NP_055766.2"/>
</dbReference>
<dbReference type="UCSC" id="uc001jlz.5">
    <molecule id="Q70YC5-1"/>
    <property type="organism name" value="human"/>
</dbReference>
<dbReference type="AGR" id="HGNC:18194"/>
<dbReference type="CTD" id="22891"/>
<dbReference type="DisGeNET" id="22891"/>
<dbReference type="GeneCards" id="ZNF365"/>
<dbReference type="HGNC" id="HGNC:18194">
    <property type="gene designation" value="ZNF365"/>
</dbReference>
<dbReference type="HPA" id="ENSG00000138311">
    <property type="expression patterns" value="Group enriched (brain, esophagus)"/>
</dbReference>
<dbReference type="MalaCards" id="ZNF365"/>
<dbReference type="MIM" id="607818">
    <property type="type" value="gene"/>
</dbReference>
<dbReference type="neXtProt" id="NX_Q70YC5"/>
<dbReference type="OpenTargets" id="ENSG00000138311"/>
<dbReference type="Orphanet" id="2073">
    <property type="disease" value="Narcolepsy type 1"/>
</dbReference>
<dbReference type="Orphanet" id="83465">
    <property type="disease" value="Narcolepsy type 2"/>
</dbReference>
<dbReference type="PharmGKB" id="PA134873576"/>
<dbReference type="VEuPathDB" id="HostDB:ENSG00000138311"/>
<dbReference type="eggNOG" id="ENOG502QT88">
    <property type="taxonomic scope" value="Eukaryota"/>
</dbReference>
<dbReference type="GeneTree" id="ENSGT00530000063713"/>
<dbReference type="HOGENOM" id="CLU_049609_0_0_1"/>
<dbReference type="InParanoid" id="Q70YC5"/>
<dbReference type="OMA" id="CNHADLK"/>
<dbReference type="OrthoDB" id="271433at2759"/>
<dbReference type="PAN-GO" id="Q70YC5">
    <property type="GO annotations" value="4 GO annotations based on evolutionary models"/>
</dbReference>
<dbReference type="PhylomeDB" id="Q70YC5"/>
<dbReference type="TreeFam" id="TF329439"/>
<dbReference type="PathwayCommons" id="Q70YC5"/>
<dbReference type="SignaLink" id="Q70YC5"/>
<dbReference type="SIGNOR" id="Q70YC5"/>
<dbReference type="BioGRID-ORCS" id="22891">
    <property type="hits" value="10 hits in 1148 CRISPR screens"/>
</dbReference>
<dbReference type="CD-CODE" id="8C2F96ED">
    <property type="entry name" value="Centrosome"/>
</dbReference>
<dbReference type="ChiTaRS" id="ZNF365">
    <property type="organism name" value="human"/>
</dbReference>
<dbReference type="GenomeRNAi" id="22891"/>
<dbReference type="Pharos" id="Q70YC5">
    <property type="development level" value="Tbio"/>
</dbReference>
<dbReference type="Proteomes" id="UP000005640">
    <property type="component" value="Chromosome 10"/>
</dbReference>
<dbReference type="RNAct" id="Q70YC5">
    <property type="molecule type" value="protein"/>
</dbReference>
<dbReference type="Bgee" id="ENSG00000138311">
    <property type="expression patterns" value="Expressed in middle temporal gyrus and 145 other cell types or tissues"/>
</dbReference>
<dbReference type="ExpressionAtlas" id="Q70YC5">
    <property type="expression patterns" value="baseline and differential"/>
</dbReference>
<dbReference type="GO" id="GO:0005813">
    <property type="term" value="C:centrosome"/>
    <property type="evidence" value="ECO:0000314"/>
    <property type="project" value="CACAO"/>
</dbReference>
<dbReference type="GO" id="GO:0005737">
    <property type="term" value="C:cytoplasm"/>
    <property type="evidence" value="ECO:0007669"/>
    <property type="project" value="UniProtKB-KW"/>
</dbReference>
<dbReference type="GO" id="GO:0042802">
    <property type="term" value="F:identical protein binding"/>
    <property type="evidence" value="ECO:0000353"/>
    <property type="project" value="IntAct"/>
</dbReference>
<dbReference type="GO" id="GO:0008270">
    <property type="term" value="F:zinc ion binding"/>
    <property type="evidence" value="ECO:0007669"/>
    <property type="project" value="UniProtKB-KW"/>
</dbReference>
<dbReference type="GO" id="GO:0021687">
    <property type="term" value="P:cerebellar molecular layer morphogenesis"/>
    <property type="evidence" value="ECO:0000250"/>
    <property type="project" value="UniProtKB"/>
</dbReference>
<dbReference type="GO" id="GO:0140059">
    <property type="term" value="P:dendrite arborization"/>
    <property type="evidence" value="ECO:0000250"/>
    <property type="project" value="UniProtKB"/>
</dbReference>
<dbReference type="GO" id="GO:0060997">
    <property type="term" value="P:dendritic spine morphogenesis"/>
    <property type="evidence" value="ECO:0000250"/>
    <property type="project" value="UniProtKB"/>
</dbReference>
<dbReference type="GO" id="GO:0010977">
    <property type="term" value="P:negative regulation of neuron projection development"/>
    <property type="evidence" value="ECO:0000314"/>
    <property type="project" value="UniProtKB"/>
</dbReference>
<dbReference type="GO" id="GO:0048714">
    <property type="term" value="P:positive regulation of oligodendrocyte differentiation"/>
    <property type="evidence" value="ECO:0000250"/>
    <property type="project" value="UniProtKB"/>
</dbReference>
<dbReference type="GO" id="GO:0110026">
    <property type="term" value="P:regulation of DNA strand resection involved in replication fork processing"/>
    <property type="evidence" value="ECO:0000315"/>
    <property type="project" value="UniProtKB"/>
</dbReference>
<dbReference type="GO" id="GO:0010569">
    <property type="term" value="P:regulation of double-strand break repair via homologous recombination"/>
    <property type="evidence" value="ECO:0000315"/>
    <property type="project" value="UniProtKB"/>
</dbReference>
<dbReference type="GO" id="GO:0010975">
    <property type="term" value="P:regulation of neuron projection development"/>
    <property type="evidence" value="ECO:0000318"/>
    <property type="project" value="GO_Central"/>
</dbReference>
<dbReference type="GO" id="GO:0000723">
    <property type="term" value="P:telomere maintenance"/>
    <property type="evidence" value="ECO:0000315"/>
    <property type="project" value="UniProtKB"/>
</dbReference>
<dbReference type="InterPro" id="IPR057038">
    <property type="entry name" value="FBX41/ZN365_Znf-C2H2"/>
</dbReference>
<dbReference type="InterPro" id="IPR052283">
    <property type="entry name" value="GenomicStab_NeuMorph_Reg"/>
</dbReference>
<dbReference type="PANTHER" id="PTHR15739:SF2">
    <property type="entry name" value="PROTEIN ZNF365"/>
    <property type="match status" value="1"/>
</dbReference>
<dbReference type="PANTHER" id="PTHR15739">
    <property type="entry name" value="ZINC FINGER PROTEIN"/>
    <property type="match status" value="1"/>
</dbReference>
<dbReference type="Pfam" id="PF23165">
    <property type="entry name" value="zf-C2H2_FBX41"/>
    <property type="match status" value="1"/>
</dbReference>
<reference key="1">
    <citation type="journal article" date="2003" name="Am. J. Hum. Genet.">
        <title>Identification of a novel gene and a common variant associated with uric acid nephrolithiasis in a Sardinian genetic isolate.</title>
        <authorList>
            <person name="Gianfrancesco F."/>
            <person name="Esposito T."/>
            <person name="Ombra M.N."/>
            <person name="Forabosco P."/>
            <person name="Maninchedda G."/>
            <person name="Fattorini M."/>
            <person name="Casula S."/>
            <person name="Vaccargiu S."/>
            <person name="Casu G."/>
            <person name="Cardia F."/>
            <person name="Deiana I."/>
            <person name="Melis P."/>
            <person name="Falchi M."/>
            <person name="Pirastu M."/>
        </authorList>
    </citation>
    <scope>NUCLEOTIDE SEQUENCE [MRNA] (ISOFORMS 1; 2 AND 3)</scope>
    <scope>VARIANT SER-337</scope>
    <scope>TISSUE SPECIFICITY</scope>
    <source>
        <tissue>Kidney</tissue>
    </source>
</reference>
<reference key="2">
    <citation type="journal article" date="1998" name="DNA Res.">
        <title>Prediction of the coding sequences of unidentified human genes. XII. The complete sequences of 100 new cDNA clones from brain which code for large proteins in vitro.</title>
        <authorList>
            <person name="Nagase T."/>
            <person name="Ishikawa K."/>
            <person name="Suyama M."/>
            <person name="Kikuno R."/>
            <person name="Hirosawa M."/>
            <person name="Miyajima N."/>
            <person name="Tanaka A."/>
            <person name="Kotani H."/>
            <person name="Nomura N."/>
            <person name="Ohara O."/>
        </authorList>
    </citation>
    <scope>NUCLEOTIDE SEQUENCE [LARGE SCALE MRNA] (ISOFORM 1)</scope>
    <scope>VARIANT SER-337</scope>
    <source>
        <tissue>Brain</tissue>
    </source>
</reference>
<reference key="3">
    <citation type="journal article" date="2004" name="Nat. Genet.">
        <title>Complete sequencing and characterization of 21,243 full-length human cDNAs.</title>
        <authorList>
            <person name="Ota T."/>
            <person name="Suzuki Y."/>
            <person name="Nishikawa T."/>
            <person name="Otsuki T."/>
            <person name="Sugiyama T."/>
            <person name="Irie R."/>
            <person name="Wakamatsu A."/>
            <person name="Hayashi K."/>
            <person name="Sato H."/>
            <person name="Nagai K."/>
            <person name="Kimura K."/>
            <person name="Makita H."/>
            <person name="Sekine M."/>
            <person name="Obayashi M."/>
            <person name="Nishi T."/>
            <person name="Shibahara T."/>
            <person name="Tanaka T."/>
            <person name="Ishii S."/>
            <person name="Yamamoto J."/>
            <person name="Saito K."/>
            <person name="Kawai Y."/>
            <person name="Isono Y."/>
            <person name="Nakamura Y."/>
            <person name="Nagahari K."/>
            <person name="Murakami K."/>
            <person name="Yasuda T."/>
            <person name="Iwayanagi T."/>
            <person name="Wagatsuma M."/>
            <person name="Shiratori A."/>
            <person name="Sudo H."/>
            <person name="Hosoiri T."/>
            <person name="Kaku Y."/>
            <person name="Kodaira H."/>
            <person name="Kondo H."/>
            <person name="Sugawara M."/>
            <person name="Takahashi M."/>
            <person name="Kanda K."/>
            <person name="Yokoi T."/>
            <person name="Furuya T."/>
            <person name="Kikkawa E."/>
            <person name="Omura Y."/>
            <person name="Abe K."/>
            <person name="Kamihara K."/>
            <person name="Katsuta N."/>
            <person name="Sato K."/>
            <person name="Tanikawa M."/>
            <person name="Yamazaki M."/>
            <person name="Ninomiya K."/>
            <person name="Ishibashi T."/>
            <person name="Yamashita H."/>
            <person name="Murakawa K."/>
            <person name="Fujimori K."/>
            <person name="Tanai H."/>
            <person name="Kimata M."/>
            <person name="Watanabe M."/>
            <person name="Hiraoka S."/>
            <person name="Chiba Y."/>
            <person name="Ishida S."/>
            <person name="Ono Y."/>
            <person name="Takiguchi S."/>
            <person name="Watanabe S."/>
            <person name="Yosida M."/>
            <person name="Hotuta T."/>
            <person name="Kusano J."/>
            <person name="Kanehori K."/>
            <person name="Takahashi-Fujii A."/>
            <person name="Hara H."/>
            <person name="Tanase T.-O."/>
            <person name="Nomura Y."/>
            <person name="Togiya S."/>
            <person name="Komai F."/>
            <person name="Hara R."/>
            <person name="Takeuchi K."/>
            <person name="Arita M."/>
            <person name="Imose N."/>
            <person name="Musashino K."/>
            <person name="Yuuki H."/>
            <person name="Oshima A."/>
            <person name="Sasaki N."/>
            <person name="Aotsuka S."/>
            <person name="Yoshikawa Y."/>
            <person name="Matsunawa H."/>
            <person name="Ichihara T."/>
            <person name="Shiohata N."/>
            <person name="Sano S."/>
            <person name="Moriya S."/>
            <person name="Momiyama H."/>
            <person name="Satoh N."/>
            <person name="Takami S."/>
            <person name="Terashima Y."/>
            <person name="Suzuki O."/>
            <person name="Nakagawa S."/>
            <person name="Senoh A."/>
            <person name="Mizoguchi H."/>
            <person name="Goto Y."/>
            <person name="Shimizu F."/>
            <person name="Wakebe H."/>
            <person name="Hishigaki H."/>
            <person name="Watanabe T."/>
            <person name="Sugiyama A."/>
            <person name="Takemoto M."/>
            <person name="Kawakami B."/>
            <person name="Yamazaki M."/>
            <person name="Watanabe K."/>
            <person name="Kumagai A."/>
            <person name="Itakura S."/>
            <person name="Fukuzumi Y."/>
            <person name="Fujimori Y."/>
            <person name="Komiyama M."/>
            <person name="Tashiro H."/>
            <person name="Tanigami A."/>
            <person name="Fujiwara T."/>
            <person name="Ono T."/>
            <person name="Yamada K."/>
            <person name="Fujii Y."/>
            <person name="Ozaki K."/>
            <person name="Hirao M."/>
            <person name="Ohmori Y."/>
            <person name="Kawabata A."/>
            <person name="Hikiji T."/>
            <person name="Kobatake N."/>
            <person name="Inagaki H."/>
            <person name="Ikema Y."/>
            <person name="Okamoto S."/>
            <person name="Okitani R."/>
            <person name="Kawakami T."/>
            <person name="Noguchi S."/>
            <person name="Itoh T."/>
            <person name="Shigeta K."/>
            <person name="Senba T."/>
            <person name="Matsumura K."/>
            <person name="Nakajima Y."/>
            <person name="Mizuno T."/>
            <person name="Morinaga M."/>
            <person name="Sasaki M."/>
            <person name="Togashi T."/>
            <person name="Oyama M."/>
            <person name="Hata H."/>
            <person name="Watanabe M."/>
            <person name="Komatsu T."/>
            <person name="Mizushima-Sugano J."/>
            <person name="Satoh T."/>
            <person name="Shirai Y."/>
            <person name="Takahashi Y."/>
            <person name="Nakagawa K."/>
            <person name="Okumura K."/>
            <person name="Nagase T."/>
            <person name="Nomura N."/>
            <person name="Kikuchi H."/>
            <person name="Masuho Y."/>
            <person name="Yamashita R."/>
            <person name="Nakai K."/>
            <person name="Yada T."/>
            <person name="Nakamura Y."/>
            <person name="Ohara O."/>
            <person name="Isogai T."/>
            <person name="Sugano S."/>
        </authorList>
    </citation>
    <scope>NUCLEOTIDE SEQUENCE [LARGE SCALE MRNA] (ISOFORM 1)</scope>
    <scope>VARIANT SER-337</scope>
    <source>
        <tissue>Brain</tissue>
        <tissue>Cerebellum</tissue>
    </source>
</reference>
<reference key="4">
    <citation type="journal article" date="2007" name="BMC Genomics">
        <title>The full-ORF clone resource of the German cDNA consortium.</title>
        <authorList>
            <person name="Bechtel S."/>
            <person name="Rosenfelder H."/>
            <person name="Duda A."/>
            <person name="Schmidt C.P."/>
            <person name="Ernst U."/>
            <person name="Wellenreuther R."/>
            <person name="Mehrle A."/>
            <person name="Schuster C."/>
            <person name="Bahr A."/>
            <person name="Bloecker H."/>
            <person name="Heubner D."/>
            <person name="Hoerlein A."/>
            <person name="Michel G."/>
            <person name="Wedler H."/>
            <person name="Koehrer K."/>
            <person name="Ottenwaelder B."/>
            <person name="Poustka A."/>
            <person name="Wiemann S."/>
            <person name="Schupp I."/>
        </authorList>
    </citation>
    <scope>NUCLEOTIDE SEQUENCE [LARGE SCALE MRNA] (ISOFORM 5)</scope>
    <scope>VARIANT SER-337</scope>
    <source>
        <tissue>Cervix</tissue>
    </source>
</reference>
<reference key="5">
    <citation type="journal article" date="2004" name="Nature">
        <title>The DNA sequence and comparative analysis of human chromosome 10.</title>
        <authorList>
            <person name="Deloukas P."/>
            <person name="Earthrowl M.E."/>
            <person name="Grafham D.V."/>
            <person name="Rubenfield M."/>
            <person name="French L."/>
            <person name="Steward C.A."/>
            <person name="Sims S.K."/>
            <person name="Jones M.C."/>
            <person name="Searle S."/>
            <person name="Scott C."/>
            <person name="Howe K."/>
            <person name="Hunt S.E."/>
            <person name="Andrews T.D."/>
            <person name="Gilbert J.G.R."/>
            <person name="Swarbreck D."/>
            <person name="Ashurst J.L."/>
            <person name="Taylor A."/>
            <person name="Battles J."/>
            <person name="Bird C.P."/>
            <person name="Ainscough R."/>
            <person name="Almeida J.P."/>
            <person name="Ashwell R.I.S."/>
            <person name="Ambrose K.D."/>
            <person name="Babbage A.K."/>
            <person name="Bagguley C.L."/>
            <person name="Bailey J."/>
            <person name="Banerjee R."/>
            <person name="Bates K."/>
            <person name="Beasley H."/>
            <person name="Bray-Allen S."/>
            <person name="Brown A.J."/>
            <person name="Brown J.Y."/>
            <person name="Burford D.C."/>
            <person name="Burrill W."/>
            <person name="Burton J."/>
            <person name="Cahill P."/>
            <person name="Camire D."/>
            <person name="Carter N.P."/>
            <person name="Chapman J.C."/>
            <person name="Clark S.Y."/>
            <person name="Clarke G."/>
            <person name="Clee C.M."/>
            <person name="Clegg S."/>
            <person name="Corby N."/>
            <person name="Coulson A."/>
            <person name="Dhami P."/>
            <person name="Dutta I."/>
            <person name="Dunn M."/>
            <person name="Faulkner L."/>
            <person name="Frankish A."/>
            <person name="Frankland J.A."/>
            <person name="Garner P."/>
            <person name="Garnett J."/>
            <person name="Gribble S."/>
            <person name="Griffiths C."/>
            <person name="Grocock R."/>
            <person name="Gustafson E."/>
            <person name="Hammond S."/>
            <person name="Harley J.L."/>
            <person name="Hart E."/>
            <person name="Heath P.D."/>
            <person name="Ho T.P."/>
            <person name="Hopkins B."/>
            <person name="Horne J."/>
            <person name="Howden P.J."/>
            <person name="Huckle E."/>
            <person name="Hynds C."/>
            <person name="Johnson C."/>
            <person name="Johnson D."/>
            <person name="Kana A."/>
            <person name="Kay M."/>
            <person name="Kimberley A.M."/>
            <person name="Kershaw J.K."/>
            <person name="Kokkinaki M."/>
            <person name="Laird G.K."/>
            <person name="Lawlor S."/>
            <person name="Lee H.M."/>
            <person name="Leongamornlert D.A."/>
            <person name="Laird G."/>
            <person name="Lloyd C."/>
            <person name="Lloyd D.M."/>
            <person name="Loveland J."/>
            <person name="Lovell J."/>
            <person name="McLaren S."/>
            <person name="McLay K.E."/>
            <person name="McMurray A."/>
            <person name="Mashreghi-Mohammadi M."/>
            <person name="Matthews L."/>
            <person name="Milne S."/>
            <person name="Nickerson T."/>
            <person name="Nguyen M."/>
            <person name="Overton-Larty E."/>
            <person name="Palmer S.A."/>
            <person name="Pearce A.V."/>
            <person name="Peck A.I."/>
            <person name="Pelan S."/>
            <person name="Phillimore B."/>
            <person name="Porter K."/>
            <person name="Rice C.M."/>
            <person name="Rogosin A."/>
            <person name="Ross M.T."/>
            <person name="Sarafidou T."/>
            <person name="Sehra H.K."/>
            <person name="Shownkeen R."/>
            <person name="Skuce C.D."/>
            <person name="Smith M."/>
            <person name="Standring L."/>
            <person name="Sycamore N."/>
            <person name="Tester J."/>
            <person name="Thorpe A."/>
            <person name="Torcasso W."/>
            <person name="Tracey A."/>
            <person name="Tromans A."/>
            <person name="Tsolas J."/>
            <person name="Wall M."/>
            <person name="Walsh J."/>
            <person name="Wang H."/>
            <person name="Weinstock K."/>
            <person name="West A.P."/>
            <person name="Willey D.L."/>
            <person name="Whitehead S.L."/>
            <person name="Wilming L."/>
            <person name="Wray P.W."/>
            <person name="Young L."/>
            <person name="Chen Y."/>
            <person name="Lovering R.C."/>
            <person name="Moschonas N.K."/>
            <person name="Siebert R."/>
            <person name="Fechtel K."/>
            <person name="Bentley D."/>
            <person name="Durbin R.M."/>
            <person name="Hubbard T."/>
            <person name="Doucette-Stamm L."/>
            <person name="Beck S."/>
            <person name="Smith D.R."/>
            <person name="Rogers J."/>
        </authorList>
    </citation>
    <scope>NUCLEOTIDE SEQUENCE [LARGE SCALE GENOMIC DNA]</scope>
</reference>
<reference key="6">
    <citation type="journal article" date="2004" name="Genome Res.">
        <title>The status, quality, and expansion of the NIH full-length cDNA project: the Mammalian Gene Collection (MGC).</title>
        <authorList>
            <consortium name="The MGC Project Team"/>
        </authorList>
    </citation>
    <scope>NUCLEOTIDE SEQUENCE [LARGE SCALE MRNA] (ISOFORM 6)</scope>
    <scope>NUCLEOTIDE SEQUENCE [LARGE SCALE MRNA] OF 1-394 (ISOFORM 1)</scope>
    <source>
        <tissue>Brain</tissue>
        <tissue>Lung</tissue>
    </source>
</reference>
<reference key="7">
    <citation type="submission" date="2004-02" db="EMBL/GenBank/DDBJ databases">
        <authorList>
            <person name="Anitha A."/>
            <person name="Nakamura K."/>
            <person name="Mori N."/>
        </authorList>
    </citation>
    <scope>NUCLEOTIDE SEQUENCE [GENOMIC DNA] OF 1-247</scope>
</reference>
<reference key="8">
    <citation type="journal article" date="2004" name="Gene">
        <title>Emergence of talanin protein associated with human uric acid nephrolithiasis in the hominidae lineage.</title>
        <authorList>
            <person name="Gianfrancesco F."/>
            <person name="Esposito T."/>
            <person name="Casu G."/>
            <person name="Maninchedda G."/>
            <person name="Roberto R."/>
            <person name="Parastu M."/>
        </authorList>
    </citation>
    <scope>ALTERNATIVE SPLICING</scope>
</reference>
<reference key="9">
    <citation type="journal article" date="2006" name="Oncogene">
        <title>p78/MCRS1 forms a complex with centrosomal protein Nde1 and is essential for cell viability.</title>
        <authorList>
            <person name="Hirohashi Y."/>
            <person name="Wang Q."/>
            <person name="Liu Q."/>
            <person name="Du X."/>
            <person name="Zhang H."/>
            <person name="Sato N."/>
            <person name="Greene M.I."/>
        </authorList>
    </citation>
    <scope>INTERACTION WITH MCRS1</scope>
</reference>
<reference key="10">
    <citation type="journal article" date="2006" name="Oncogene">
        <title>Centrosomal proteins Nde1 and Su48 form a complex regulated by phosphorylation.</title>
        <authorList>
            <person name="Hirohashi Y."/>
            <person name="Wang Q."/>
            <person name="Liu Q."/>
            <person name="Li B."/>
            <person name="Du X."/>
            <person name="Zhang H."/>
            <person name="Furuuchi K."/>
            <person name="Masuda K."/>
            <person name="Sato N."/>
            <person name="Greene M.I."/>
        </authorList>
    </citation>
    <scope>INTERACTION WITH NDE1 AND NDEL1</scope>
</reference>
<reference key="11">
    <citation type="journal article" date="2006" name="Proc. Natl. Acad. Sci. U.S.A.">
        <title>Characterization of Su48, a centrosome protein essential for cell division.</title>
        <authorList>
            <person name="Wang Q."/>
            <person name="Du X."/>
            <person name="Meinkoth J."/>
            <person name="Hirohashi Y."/>
            <person name="Zhang H."/>
            <person name="Liu Q."/>
            <person name="Richter M."/>
            <person name="Greene M.I."/>
        </authorList>
    </citation>
    <scope>HOMODIMERIZATION</scope>
    <scope>SUBCELLULAR LOCATION</scope>
</reference>
<reference key="12">
    <citation type="journal article" date="2007" name="Mol. Psychiatry">
        <title>A novel DISC1-interacting partner DISC1-binding zinc-finger protein: implication in the modulation of DISC1-dependent neurite outgrowth.</title>
        <authorList>
            <person name="Hattori T."/>
            <person name="Baba K."/>
            <person name="Matsuzaki S."/>
            <person name="Honda A."/>
            <person name="Miyoshi K."/>
            <person name="Inoue K."/>
            <person name="Taniguchi M."/>
            <person name="Hashimoto H."/>
            <person name="Shintani N."/>
            <person name="Baba A."/>
            <person name="Shimizu S."/>
            <person name="Yukioka F."/>
            <person name="Kumamoto N."/>
            <person name="Yamaguchi A."/>
            <person name="Tohyama M."/>
            <person name="Katayama T."/>
        </authorList>
    </citation>
    <scope>FUNCTION</scope>
    <scope>INTERACTION WITH DISC1</scope>
    <scope>TISSUE SPECIFICITY</scope>
</reference>
<reference key="13">
    <citation type="journal article" date="2013" name="Cancer Discov.">
        <title>ZNF365 promotes stability of fragile sites and telomeres.</title>
        <authorList>
            <person name="Zhang Y."/>
            <person name="Shin S.J."/>
            <person name="Liu D."/>
            <person name="Ivanova E."/>
            <person name="Foerster F."/>
            <person name="Ying H."/>
            <person name="Zheng H."/>
            <person name="Xiao Y."/>
            <person name="Chen Z."/>
            <person name="Protopopov A."/>
            <person name="Depinho R.A."/>
            <person name="Paik J.H."/>
        </authorList>
    </citation>
    <scope>FUNCTION</scope>
</reference>
<reference key="14">
    <citation type="journal article" date="2013" name="Cell Cycle">
        <title>ZNF365 promotes stalled replication forks recovery to maintain genome stability.</title>
        <authorList>
            <person name="Zhang Y."/>
            <person name="Park E."/>
            <person name="Kim C.S."/>
            <person name="Paik J.H."/>
        </authorList>
    </citation>
    <scope>FUNCTION</scope>
    <scope>INTERACTION WITH PARP1</scope>
    <scope>INDUCTION</scope>
</reference>